<proteinExistence type="inferred from homology"/>
<comment type="function">
    <text evidence="1">This protein is located at the 30S-50S ribosomal subunit interface and may play a role in the structure and function of the aminoacyl-tRNA binding site.</text>
</comment>
<comment type="similarity">
    <text evidence="1">Belongs to the bacterial ribosomal protein bL19 family.</text>
</comment>
<dbReference type="EMBL" id="CP000879">
    <property type="protein sequence ID" value="ABX31067.1"/>
    <property type="molecule type" value="Genomic_DNA"/>
</dbReference>
<dbReference type="RefSeq" id="WP_012208174.1">
    <property type="nucleotide sequence ID" value="NC_010003.1"/>
</dbReference>
<dbReference type="SMR" id="A9BF03"/>
<dbReference type="STRING" id="403833.Pmob_0325"/>
<dbReference type="KEGG" id="pmo:Pmob_0325"/>
<dbReference type="eggNOG" id="COG0335">
    <property type="taxonomic scope" value="Bacteria"/>
</dbReference>
<dbReference type="HOGENOM" id="CLU_103507_2_1_0"/>
<dbReference type="OrthoDB" id="9803541at2"/>
<dbReference type="Proteomes" id="UP000000789">
    <property type="component" value="Chromosome"/>
</dbReference>
<dbReference type="GO" id="GO:0022625">
    <property type="term" value="C:cytosolic large ribosomal subunit"/>
    <property type="evidence" value="ECO:0007669"/>
    <property type="project" value="TreeGrafter"/>
</dbReference>
<dbReference type="GO" id="GO:0003735">
    <property type="term" value="F:structural constituent of ribosome"/>
    <property type="evidence" value="ECO:0007669"/>
    <property type="project" value="InterPro"/>
</dbReference>
<dbReference type="GO" id="GO:0006412">
    <property type="term" value="P:translation"/>
    <property type="evidence" value="ECO:0007669"/>
    <property type="project" value="UniProtKB-UniRule"/>
</dbReference>
<dbReference type="Gene3D" id="2.30.30.790">
    <property type="match status" value="1"/>
</dbReference>
<dbReference type="HAMAP" id="MF_00402">
    <property type="entry name" value="Ribosomal_bL19"/>
    <property type="match status" value="1"/>
</dbReference>
<dbReference type="InterPro" id="IPR001857">
    <property type="entry name" value="Ribosomal_bL19"/>
</dbReference>
<dbReference type="InterPro" id="IPR018257">
    <property type="entry name" value="Ribosomal_bL19_CS"/>
</dbReference>
<dbReference type="InterPro" id="IPR038657">
    <property type="entry name" value="Ribosomal_bL19_sf"/>
</dbReference>
<dbReference type="InterPro" id="IPR008991">
    <property type="entry name" value="Translation_prot_SH3-like_sf"/>
</dbReference>
<dbReference type="NCBIfam" id="TIGR01024">
    <property type="entry name" value="rplS_bact"/>
    <property type="match status" value="1"/>
</dbReference>
<dbReference type="PANTHER" id="PTHR15680:SF9">
    <property type="entry name" value="LARGE RIBOSOMAL SUBUNIT PROTEIN BL19M"/>
    <property type="match status" value="1"/>
</dbReference>
<dbReference type="PANTHER" id="PTHR15680">
    <property type="entry name" value="RIBOSOMAL PROTEIN L19"/>
    <property type="match status" value="1"/>
</dbReference>
<dbReference type="Pfam" id="PF01245">
    <property type="entry name" value="Ribosomal_L19"/>
    <property type="match status" value="1"/>
</dbReference>
<dbReference type="PIRSF" id="PIRSF002191">
    <property type="entry name" value="Ribosomal_L19"/>
    <property type="match status" value="1"/>
</dbReference>
<dbReference type="PRINTS" id="PR00061">
    <property type="entry name" value="RIBOSOMALL19"/>
</dbReference>
<dbReference type="SUPFAM" id="SSF50104">
    <property type="entry name" value="Translation proteins SH3-like domain"/>
    <property type="match status" value="1"/>
</dbReference>
<dbReference type="PROSITE" id="PS01015">
    <property type="entry name" value="RIBOSOMAL_L19"/>
    <property type="match status" value="1"/>
</dbReference>
<protein>
    <recommendedName>
        <fullName evidence="1">Large ribosomal subunit protein bL19</fullName>
    </recommendedName>
    <alternativeName>
        <fullName evidence="2">50S ribosomal protein L19</fullName>
    </alternativeName>
</protein>
<gene>
    <name evidence="1" type="primary">rplS</name>
    <name type="ordered locus">Pmob_0325</name>
</gene>
<feature type="chain" id="PRO_0000340742" description="Large ribosomal subunit protein bL19">
    <location>
        <begin position="1"/>
        <end position="119"/>
    </location>
</feature>
<reference key="1">
    <citation type="submission" date="2007-11" db="EMBL/GenBank/DDBJ databases">
        <title>Complete sequence of Petroga mobilis SJ95.</title>
        <authorList>
            <consortium name="US DOE Joint Genome Institute"/>
            <person name="Copeland A."/>
            <person name="Lucas S."/>
            <person name="Lapidus A."/>
            <person name="Barry K."/>
            <person name="Glavina del Rio T."/>
            <person name="Dalin E."/>
            <person name="Tice H."/>
            <person name="Pitluck S."/>
            <person name="Meincke L."/>
            <person name="Brettin T."/>
            <person name="Bruce D."/>
            <person name="Detter J.C."/>
            <person name="Han C."/>
            <person name="Kuske C.R."/>
            <person name="Schmutz J."/>
            <person name="Larimer F."/>
            <person name="Land M."/>
            <person name="Hauser L."/>
            <person name="Kyrpides N."/>
            <person name="Mikhailova N."/>
            <person name="Noll K."/>
            <person name="Richardson P."/>
        </authorList>
    </citation>
    <scope>NUCLEOTIDE SEQUENCE [LARGE SCALE GENOMIC DNA]</scope>
    <source>
        <strain>DSM 10674 / SJ95</strain>
    </source>
</reference>
<name>RL19_PETMO</name>
<keyword id="KW-0687">Ribonucleoprotein</keyword>
<keyword id="KW-0689">Ribosomal protein</keyword>
<evidence type="ECO:0000255" key="1">
    <source>
        <dbReference type="HAMAP-Rule" id="MF_00402"/>
    </source>
</evidence>
<evidence type="ECO:0000305" key="2"/>
<accession>A9BF03</accession>
<organism>
    <name type="scientific">Petrotoga mobilis (strain DSM 10674 / SJ95)</name>
    <dbReference type="NCBI Taxonomy" id="403833"/>
    <lineage>
        <taxon>Bacteria</taxon>
        <taxon>Thermotogati</taxon>
        <taxon>Thermotogota</taxon>
        <taxon>Thermotogae</taxon>
        <taxon>Petrotogales</taxon>
        <taxon>Petrotogaceae</taxon>
        <taxon>Petrotoga</taxon>
    </lineage>
</organism>
<sequence>MDKIINAVETNYKKEDIPEIRPGDTVRVNVKVVEGEGEKKRERIQPFEGIVIKIRGAGLGRSFTVRKMGADRVGVERIFPFHSPSISSIEVLKKGKTRRAKLYYLRDVKGKIRIKERKD</sequence>